<feature type="chain" id="PRO_0000363027" description="S-adenosylmethionine synthase 4">
    <location>
        <begin position="1"/>
        <end position="396"/>
    </location>
</feature>
<feature type="binding site" evidence="3">
    <location>
        <position position="12"/>
    </location>
    <ligand>
        <name>Mg(2+)</name>
        <dbReference type="ChEBI" id="CHEBI:18420"/>
    </ligand>
</feature>
<feature type="binding site" description="in other chain" evidence="4">
    <location>
        <position position="18"/>
    </location>
    <ligand>
        <name>ATP</name>
        <dbReference type="ChEBI" id="CHEBI:30616"/>
        <note>ligand shared between two neighboring subunits</note>
    </ligand>
</feature>
<feature type="binding site" evidence="2">
    <location>
        <position position="46"/>
    </location>
    <ligand>
        <name>K(+)</name>
        <dbReference type="ChEBI" id="CHEBI:29103"/>
    </ligand>
</feature>
<feature type="binding site" description="in other chain" evidence="2">
    <location>
        <position position="59"/>
    </location>
    <ligand>
        <name>L-methionine</name>
        <dbReference type="ChEBI" id="CHEBI:57844"/>
        <note>ligand shared between two neighboring subunits</note>
    </ligand>
</feature>
<feature type="binding site" description="in other chain" evidence="2">
    <location>
        <position position="102"/>
    </location>
    <ligand>
        <name>L-methionine</name>
        <dbReference type="ChEBI" id="CHEBI:57844"/>
        <note>ligand shared between two neighboring subunits</note>
    </ligand>
</feature>
<feature type="binding site" description="in other chain" evidence="4">
    <location>
        <begin position="170"/>
        <end position="172"/>
    </location>
    <ligand>
        <name>ATP</name>
        <dbReference type="ChEBI" id="CHEBI:30616"/>
        <note>ligand shared between two neighboring subunits</note>
    </ligand>
</feature>
<feature type="binding site" description="in other chain" evidence="4">
    <location>
        <begin position="238"/>
        <end position="241"/>
    </location>
    <ligand>
        <name>ATP</name>
        <dbReference type="ChEBI" id="CHEBI:30616"/>
        <note>ligand shared between two neighboring subunits</note>
    </ligand>
</feature>
<feature type="binding site" description="in other chain" evidence="4">
    <location>
        <position position="249"/>
    </location>
    <ligand>
        <name>ATP</name>
        <dbReference type="ChEBI" id="CHEBI:30616"/>
        <note>ligand shared between two neighboring subunits</note>
    </ligand>
</feature>
<feature type="binding site" evidence="2">
    <location>
        <position position="249"/>
    </location>
    <ligand>
        <name>L-methionine</name>
        <dbReference type="ChEBI" id="CHEBI:57844"/>
        <note>ligand shared between two neighboring subunits</note>
    </ligand>
</feature>
<feature type="binding site" description="in other chain" evidence="2">
    <location>
        <begin position="255"/>
        <end position="256"/>
    </location>
    <ligand>
        <name>ATP</name>
        <dbReference type="ChEBI" id="CHEBI:30616"/>
        <note>ligand shared between two neighboring subunits</note>
    </ligand>
</feature>
<feature type="binding site" evidence="2">
    <location>
        <position position="272"/>
    </location>
    <ligand>
        <name>ATP</name>
        <dbReference type="ChEBI" id="CHEBI:30616"/>
        <note>ligand shared between two neighboring subunits</note>
    </ligand>
</feature>
<feature type="binding site" evidence="2">
    <location>
        <position position="276"/>
    </location>
    <ligand>
        <name>ATP</name>
        <dbReference type="ChEBI" id="CHEBI:30616"/>
        <note>ligand shared between two neighboring subunits</note>
    </ligand>
</feature>
<feature type="binding site" evidence="3">
    <location>
        <position position="280"/>
    </location>
    <ligand>
        <name>ATP</name>
        <dbReference type="ChEBI" id="CHEBI:30616"/>
        <note>ligand shared between two neighboring subunits</note>
    </ligand>
</feature>
<feature type="binding site" description="in other chain" evidence="2">
    <location>
        <position position="280"/>
    </location>
    <ligand>
        <name>L-methionine</name>
        <dbReference type="ChEBI" id="CHEBI:57844"/>
        <note>ligand shared between two neighboring subunits</note>
    </ligand>
</feature>
<evidence type="ECO:0000250" key="1"/>
<evidence type="ECO:0000250" key="2">
    <source>
        <dbReference type="UniProtKB" id="P0A817"/>
    </source>
</evidence>
<evidence type="ECO:0000250" key="3">
    <source>
        <dbReference type="UniProtKB" id="P13444"/>
    </source>
</evidence>
<evidence type="ECO:0000250" key="4">
    <source>
        <dbReference type="UniProtKB" id="Q00266"/>
    </source>
</evidence>
<evidence type="ECO:0000250" key="5">
    <source>
        <dbReference type="UniProtKB" id="Q96551"/>
    </source>
</evidence>
<evidence type="ECO:0000305" key="6"/>
<sequence length="396" mass="43211">MAEVETFLFTSESVNEGHPDKLCDQISDAVLDACLAEDPDSKVACETCTKTNMVMVFGEITTKANVDYEKIVRDTCRGIGFVSNDVGLDADHCKVLVNIEQQSPDIAQGVHGHFTKRPEEIGAGDQGHMFGYATDETPEFMPLSHVLATKLGARLTEVRKNATCPWLRPDGKTQVTVEYHNDNGAMVPIRVHTVLISTQHDETVTNDEIAADLKEHVIKPVIPEQYLDENTIFHLNPSGRFVIGGPHGDAGLTGRKIIIDTYGGWGAHGGGAFSGKDPTKVDRSGAYIARQAAKSIVASGIARRCIVQVSYAIGVPEPLSVFVDTYGTGKIPDKEILEIVKENFDFRPGMIIINLDLKRGGSGRYLKTAAYGHFGRDGADFTWEVVKPLKWEKPSA</sequence>
<accession>Q4LB21</accession>
<reference key="1">
    <citation type="journal article" date="2005" name="Plant Mol. Biol.">
        <title>The methylation cycle and its possible functions in barley endosperm development.</title>
        <authorList>
            <person name="Radchuk V.V."/>
            <person name="Sreenivasulu N."/>
            <person name="Radchuk R.I."/>
            <person name="Wobus U."/>
            <person name="Weschke W."/>
        </authorList>
    </citation>
    <scope>NUCLEOTIDE SEQUENCE [MRNA]</scope>
    <source>
        <strain>cv. Barke</strain>
        <tissue>Seed</tissue>
    </source>
</reference>
<dbReference type="EC" id="2.5.1.6" evidence="5"/>
<dbReference type="EMBL" id="AM039896">
    <property type="protein sequence ID" value="CAJ01705.1"/>
    <property type="molecule type" value="mRNA"/>
</dbReference>
<dbReference type="SMR" id="Q4LB21"/>
<dbReference type="UniPathway" id="UPA00315">
    <property type="reaction ID" value="UER00080"/>
</dbReference>
<dbReference type="ExpressionAtlas" id="Q4LB21">
    <property type="expression patterns" value="baseline and differential"/>
</dbReference>
<dbReference type="GO" id="GO:0005737">
    <property type="term" value="C:cytoplasm"/>
    <property type="evidence" value="ECO:0007669"/>
    <property type="project" value="UniProtKB-SubCell"/>
</dbReference>
<dbReference type="GO" id="GO:0005524">
    <property type="term" value="F:ATP binding"/>
    <property type="evidence" value="ECO:0007669"/>
    <property type="project" value="UniProtKB-KW"/>
</dbReference>
<dbReference type="GO" id="GO:0046872">
    <property type="term" value="F:metal ion binding"/>
    <property type="evidence" value="ECO:0007669"/>
    <property type="project" value="UniProtKB-KW"/>
</dbReference>
<dbReference type="GO" id="GO:0004478">
    <property type="term" value="F:methionine adenosyltransferase activity"/>
    <property type="evidence" value="ECO:0007669"/>
    <property type="project" value="UniProtKB-EC"/>
</dbReference>
<dbReference type="GO" id="GO:0006730">
    <property type="term" value="P:one-carbon metabolic process"/>
    <property type="evidence" value="ECO:0007669"/>
    <property type="project" value="UniProtKB-KW"/>
</dbReference>
<dbReference type="GO" id="GO:0006556">
    <property type="term" value="P:S-adenosylmethionine biosynthetic process"/>
    <property type="evidence" value="ECO:0007669"/>
    <property type="project" value="UniProtKB-UniPathway"/>
</dbReference>
<dbReference type="CDD" id="cd18079">
    <property type="entry name" value="S-AdoMet_synt"/>
    <property type="match status" value="1"/>
</dbReference>
<dbReference type="FunFam" id="3.30.300.10:FF:000001">
    <property type="entry name" value="S-adenosylmethionine synthase"/>
    <property type="match status" value="1"/>
</dbReference>
<dbReference type="FunFam" id="3.30.300.10:FF:000003">
    <property type="entry name" value="S-adenosylmethionine synthase"/>
    <property type="match status" value="1"/>
</dbReference>
<dbReference type="FunFam" id="3.30.300.10:FF:000004">
    <property type="entry name" value="S-adenosylmethionine synthase"/>
    <property type="match status" value="1"/>
</dbReference>
<dbReference type="Gene3D" id="3.30.300.10">
    <property type="match status" value="3"/>
</dbReference>
<dbReference type="HAMAP" id="MF_00086">
    <property type="entry name" value="S_AdoMet_synth1"/>
    <property type="match status" value="1"/>
</dbReference>
<dbReference type="InterPro" id="IPR022631">
    <property type="entry name" value="ADOMET_SYNTHASE_CS"/>
</dbReference>
<dbReference type="InterPro" id="IPR022630">
    <property type="entry name" value="S-AdoMet_synt_C"/>
</dbReference>
<dbReference type="InterPro" id="IPR022629">
    <property type="entry name" value="S-AdoMet_synt_central"/>
</dbReference>
<dbReference type="InterPro" id="IPR022628">
    <property type="entry name" value="S-AdoMet_synt_N"/>
</dbReference>
<dbReference type="InterPro" id="IPR002133">
    <property type="entry name" value="S-AdoMet_synthetase"/>
</dbReference>
<dbReference type="InterPro" id="IPR022636">
    <property type="entry name" value="S-AdoMet_synthetase_sfam"/>
</dbReference>
<dbReference type="NCBIfam" id="TIGR01034">
    <property type="entry name" value="metK"/>
    <property type="match status" value="1"/>
</dbReference>
<dbReference type="PANTHER" id="PTHR11964">
    <property type="entry name" value="S-ADENOSYLMETHIONINE SYNTHETASE"/>
    <property type="match status" value="1"/>
</dbReference>
<dbReference type="Pfam" id="PF02773">
    <property type="entry name" value="S-AdoMet_synt_C"/>
    <property type="match status" value="1"/>
</dbReference>
<dbReference type="Pfam" id="PF02772">
    <property type="entry name" value="S-AdoMet_synt_M"/>
    <property type="match status" value="1"/>
</dbReference>
<dbReference type="Pfam" id="PF00438">
    <property type="entry name" value="S-AdoMet_synt_N"/>
    <property type="match status" value="1"/>
</dbReference>
<dbReference type="PIRSF" id="PIRSF000497">
    <property type="entry name" value="MAT"/>
    <property type="match status" value="1"/>
</dbReference>
<dbReference type="SUPFAM" id="SSF55973">
    <property type="entry name" value="S-adenosylmethionine synthetase"/>
    <property type="match status" value="3"/>
</dbReference>
<dbReference type="PROSITE" id="PS00376">
    <property type="entry name" value="ADOMET_SYNTHASE_1"/>
    <property type="match status" value="1"/>
</dbReference>
<dbReference type="PROSITE" id="PS00377">
    <property type="entry name" value="ADOMET_SYNTHASE_2"/>
    <property type="match status" value="1"/>
</dbReference>
<name>METK4_HORVU</name>
<protein>
    <recommendedName>
        <fullName>S-adenosylmethionine synthase 4</fullName>
        <shortName>AdoMet synthase 4</shortName>
        <ecNumber evidence="5">2.5.1.6</ecNumber>
    </recommendedName>
    <alternativeName>
        <fullName>Methionine adenosyltransferase 4</fullName>
        <shortName>MAT 4</shortName>
    </alternativeName>
</protein>
<organism>
    <name type="scientific">Hordeum vulgare</name>
    <name type="common">Barley</name>
    <dbReference type="NCBI Taxonomy" id="4513"/>
    <lineage>
        <taxon>Eukaryota</taxon>
        <taxon>Viridiplantae</taxon>
        <taxon>Streptophyta</taxon>
        <taxon>Embryophyta</taxon>
        <taxon>Tracheophyta</taxon>
        <taxon>Spermatophyta</taxon>
        <taxon>Magnoliopsida</taxon>
        <taxon>Liliopsida</taxon>
        <taxon>Poales</taxon>
        <taxon>Poaceae</taxon>
        <taxon>BOP clade</taxon>
        <taxon>Pooideae</taxon>
        <taxon>Triticodae</taxon>
        <taxon>Triticeae</taxon>
        <taxon>Hordeinae</taxon>
        <taxon>Hordeum</taxon>
    </lineage>
</organism>
<gene>
    <name type="primary">SAM4</name>
</gene>
<proteinExistence type="evidence at transcript level"/>
<comment type="function">
    <text evidence="5">Catalyzes the formation of S-adenosylmethionine from methionine and ATP. The reaction comprises two steps that are both catalyzed by the same enzyme: formation of S-adenosylmethionine (AdoMet) and triphosphate, and subsequent hydrolysis of the triphosphate.</text>
</comment>
<comment type="catalytic activity">
    <reaction evidence="5">
        <text>L-methionine + ATP + H2O = S-adenosyl-L-methionine + phosphate + diphosphate</text>
        <dbReference type="Rhea" id="RHEA:21080"/>
        <dbReference type="ChEBI" id="CHEBI:15377"/>
        <dbReference type="ChEBI" id="CHEBI:30616"/>
        <dbReference type="ChEBI" id="CHEBI:33019"/>
        <dbReference type="ChEBI" id="CHEBI:43474"/>
        <dbReference type="ChEBI" id="CHEBI:57844"/>
        <dbReference type="ChEBI" id="CHEBI:59789"/>
        <dbReference type="EC" id="2.5.1.6"/>
    </reaction>
</comment>
<comment type="cofactor">
    <cofactor evidence="5">
        <name>Mn(2+)</name>
        <dbReference type="ChEBI" id="CHEBI:29035"/>
    </cofactor>
    <cofactor evidence="5">
        <name>Mg(2+)</name>
        <dbReference type="ChEBI" id="CHEBI:18420"/>
    </cofactor>
    <cofactor evidence="5">
        <name>Co(2+)</name>
        <dbReference type="ChEBI" id="CHEBI:48828"/>
    </cofactor>
    <text evidence="3 5">Binds 2 divalent ions per subunit. The metal ions interact primarily with the substrate (By similarity). Can utilize magnesium, manganese or cobalt (in vitro) (By similarity).</text>
</comment>
<comment type="cofactor">
    <cofactor evidence="5">
        <name>K(+)</name>
        <dbReference type="ChEBI" id="CHEBI:29103"/>
    </cofactor>
    <text evidence="3">Binds 1 potassium ion per subunit. The potassium ion interacts primarily with the substrate (By similarity).</text>
</comment>
<comment type="pathway">
    <text evidence="5">Amino-acid biosynthesis; S-adenosyl-L-methionine biosynthesis; S-adenosyl-L-methionine from L-methionine: step 1/1.</text>
</comment>
<comment type="subunit">
    <text evidence="1">Homotetramer.</text>
</comment>
<comment type="subcellular location">
    <subcellularLocation>
        <location evidence="1">Cytoplasm</location>
    </subcellularLocation>
</comment>
<comment type="similarity">
    <text evidence="6">Belongs to the AdoMet synthase family.</text>
</comment>
<keyword id="KW-0067">ATP-binding</keyword>
<keyword id="KW-0170">Cobalt</keyword>
<keyword id="KW-0963">Cytoplasm</keyword>
<keyword id="KW-0460">Magnesium</keyword>
<keyword id="KW-0479">Metal-binding</keyword>
<keyword id="KW-0547">Nucleotide-binding</keyword>
<keyword id="KW-0554">One-carbon metabolism</keyword>
<keyword id="KW-0630">Potassium</keyword>
<keyword id="KW-0808">Transferase</keyword>